<reference key="1">
    <citation type="journal article" date="2008" name="J. Bacteriol.">
        <title>Genome sequence of the chemolithoautotrophic bacterium Oligotropha carboxidovorans OM5T.</title>
        <authorList>
            <person name="Paul D."/>
            <person name="Bridges S."/>
            <person name="Burgess S.C."/>
            <person name="Dandass Y."/>
            <person name="Lawrence M.L."/>
        </authorList>
    </citation>
    <scope>NUCLEOTIDE SEQUENCE [LARGE SCALE GENOMIC DNA]</scope>
    <source>
        <strain>ATCC 49405 / DSM 1227 / KCTC 32145 / OM5</strain>
    </source>
</reference>
<reference key="2">
    <citation type="journal article" date="2011" name="J. Bacteriol.">
        <title>Complete genome sequences of the chemolithoautotrophic Oligotropha carboxidovorans strains OM4 and OM5.</title>
        <authorList>
            <person name="Volland S."/>
            <person name="Rachinger M."/>
            <person name="Strittmatter A."/>
            <person name="Daniel R."/>
            <person name="Gottschalk G."/>
            <person name="Meyer O."/>
        </authorList>
    </citation>
    <scope>NUCLEOTIDE SEQUENCE [LARGE SCALE GENOMIC DNA]</scope>
    <source>
        <strain>ATCC 49405 / DSM 1227 / KCTC 32145 / OM5</strain>
    </source>
</reference>
<organism>
    <name type="scientific">Afipia carboxidovorans (strain ATCC 49405 / DSM 1227 / KCTC 32145 / OM5)</name>
    <name type="common">Oligotropha carboxidovorans</name>
    <dbReference type="NCBI Taxonomy" id="504832"/>
    <lineage>
        <taxon>Bacteria</taxon>
        <taxon>Pseudomonadati</taxon>
        <taxon>Pseudomonadota</taxon>
        <taxon>Alphaproteobacteria</taxon>
        <taxon>Hyphomicrobiales</taxon>
        <taxon>Nitrobacteraceae</taxon>
        <taxon>Afipia</taxon>
    </lineage>
</organism>
<evidence type="ECO:0000255" key="1">
    <source>
        <dbReference type="HAMAP-Rule" id="MF_01346"/>
    </source>
</evidence>
<comment type="function">
    <text evidence="1">Produces ATP from ADP in the presence of a proton gradient across the membrane. The alpha chain is a regulatory subunit.</text>
</comment>
<comment type="catalytic activity">
    <reaction evidence="1">
        <text>ATP + H2O + 4 H(+)(in) = ADP + phosphate + 5 H(+)(out)</text>
        <dbReference type="Rhea" id="RHEA:57720"/>
        <dbReference type="ChEBI" id="CHEBI:15377"/>
        <dbReference type="ChEBI" id="CHEBI:15378"/>
        <dbReference type="ChEBI" id="CHEBI:30616"/>
        <dbReference type="ChEBI" id="CHEBI:43474"/>
        <dbReference type="ChEBI" id="CHEBI:456216"/>
        <dbReference type="EC" id="7.1.2.2"/>
    </reaction>
</comment>
<comment type="subunit">
    <text evidence="1">F-type ATPases have 2 components, CF(1) - the catalytic core - and CF(0) - the membrane proton channel. CF(1) has five subunits: alpha(3), beta(3), gamma(1), delta(1), epsilon(1). CF(0) has three main subunits: a(1), b(2) and c(9-12). The alpha and beta chains form an alternating ring which encloses part of the gamma chain. CF(1) is attached to CF(0) by a central stalk formed by the gamma and epsilon chains, while a peripheral stalk is formed by the delta and b chains.</text>
</comment>
<comment type="subcellular location">
    <subcellularLocation>
        <location evidence="1">Cell inner membrane</location>
        <topology evidence="1">Peripheral membrane protein</topology>
    </subcellularLocation>
</comment>
<comment type="similarity">
    <text evidence="1">Belongs to the ATPase alpha/beta chains family.</text>
</comment>
<accession>B6JD06</accession>
<accession>F8BTY4</accession>
<keyword id="KW-0066">ATP synthesis</keyword>
<keyword id="KW-0067">ATP-binding</keyword>
<keyword id="KW-0997">Cell inner membrane</keyword>
<keyword id="KW-1003">Cell membrane</keyword>
<keyword id="KW-0139">CF(1)</keyword>
<keyword id="KW-0375">Hydrogen ion transport</keyword>
<keyword id="KW-0406">Ion transport</keyword>
<keyword id="KW-0472">Membrane</keyword>
<keyword id="KW-0547">Nucleotide-binding</keyword>
<keyword id="KW-1185">Reference proteome</keyword>
<keyword id="KW-1278">Translocase</keyword>
<keyword id="KW-0813">Transport</keyword>
<name>ATPA_AFIC5</name>
<gene>
    <name evidence="1" type="primary">atpA</name>
    <name type="ordered locus">OCAR_4592</name>
    <name type="ordered locus">OCA5_c33520</name>
</gene>
<sequence>MDIRAAEISAILKDQIKNFGQDAEVSEVGQVLSVGDGIARVYGLDNVQAGEMVEFENGTRGMALNLESDNVGIVIFGADREIKEGQTVKRTRAIVDTPVGKGLLGRVVDALGNPIDGKGPIQSDERKRVDVKAPGIIPRKSVHEPMATGLKAIDALIPIGRGQRELIIGDRQTGKTAVALDTILNQKPLNVAGAPESQKLYCVYVAVGQKRSTVAQFVKVLEEQGALEYSIVVAATASDPAPMQYLAPFTGCTMGEYFRDNGMHAVIIYDDLSKQAVAYRQMSLLLRRPPGREAYPGDVFYLHSRLLERSAKLNDSLGAGSLTALPVIETQANDVSAYIPTNVISITDGQIFLETDLFFQGIRPAVNVGLSVSRVGSSAQTKAMKKVAGKIKGELAQYREMAAFAQFGSDLDASTQRLLNRGARLTELLKQPQFSPLKMEEQVVVIWAGTNGYLDALPLNKVRAFEDGLLSLLRGKHVDILNAIRDSRDLSDDNAAKLKSVVDGFVKTFA</sequence>
<feature type="chain" id="PRO_1000143416" description="ATP synthase subunit alpha">
    <location>
        <begin position="1"/>
        <end position="510"/>
    </location>
</feature>
<feature type="binding site" evidence="1">
    <location>
        <begin position="169"/>
        <end position="176"/>
    </location>
    <ligand>
        <name>ATP</name>
        <dbReference type="ChEBI" id="CHEBI:30616"/>
    </ligand>
</feature>
<feature type="site" description="Required for activity" evidence="1">
    <location>
        <position position="371"/>
    </location>
</feature>
<dbReference type="EC" id="7.1.2.2" evidence="1"/>
<dbReference type="EMBL" id="CP001196">
    <property type="protein sequence ID" value="ACI91736.1"/>
    <property type="molecule type" value="Genomic_DNA"/>
</dbReference>
<dbReference type="EMBL" id="CP002826">
    <property type="protein sequence ID" value="AEI08026.1"/>
    <property type="molecule type" value="Genomic_DNA"/>
</dbReference>
<dbReference type="RefSeq" id="WP_012561767.1">
    <property type="nucleotide sequence ID" value="NC_015684.1"/>
</dbReference>
<dbReference type="SMR" id="B6JD06"/>
<dbReference type="STRING" id="504832.OCA5_c33520"/>
<dbReference type="KEGG" id="oca:OCAR_4592"/>
<dbReference type="KEGG" id="ocg:OCA5_c33520"/>
<dbReference type="PATRIC" id="fig|504832.7.peg.3523"/>
<dbReference type="eggNOG" id="COG0056">
    <property type="taxonomic scope" value="Bacteria"/>
</dbReference>
<dbReference type="HOGENOM" id="CLU_010091_2_1_5"/>
<dbReference type="OrthoDB" id="9803053at2"/>
<dbReference type="Proteomes" id="UP000007730">
    <property type="component" value="Chromosome"/>
</dbReference>
<dbReference type="GO" id="GO:0005886">
    <property type="term" value="C:plasma membrane"/>
    <property type="evidence" value="ECO:0007669"/>
    <property type="project" value="UniProtKB-SubCell"/>
</dbReference>
<dbReference type="GO" id="GO:0045259">
    <property type="term" value="C:proton-transporting ATP synthase complex"/>
    <property type="evidence" value="ECO:0007669"/>
    <property type="project" value="UniProtKB-KW"/>
</dbReference>
<dbReference type="GO" id="GO:0043531">
    <property type="term" value="F:ADP binding"/>
    <property type="evidence" value="ECO:0007669"/>
    <property type="project" value="TreeGrafter"/>
</dbReference>
<dbReference type="GO" id="GO:0005524">
    <property type="term" value="F:ATP binding"/>
    <property type="evidence" value="ECO:0007669"/>
    <property type="project" value="UniProtKB-UniRule"/>
</dbReference>
<dbReference type="GO" id="GO:0046933">
    <property type="term" value="F:proton-transporting ATP synthase activity, rotational mechanism"/>
    <property type="evidence" value="ECO:0007669"/>
    <property type="project" value="UniProtKB-UniRule"/>
</dbReference>
<dbReference type="CDD" id="cd18113">
    <property type="entry name" value="ATP-synt_F1_alpha_C"/>
    <property type="match status" value="1"/>
</dbReference>
<dbReference type="CDD" id="cd18116">
    <property type="entry name" value="ATP-synt_F1_alpha_N"/>
    <property type="match status" value="1"/>
</dbReference>
<dbReference type="CDD" id="cd01132">
    <property type="entry name" value="F1-ATPase_alpha_CD"/>
    <property type="match status" value="1"/>
</dbReference>
<dbReference type="FunFam" id="1.20.150.20:FF:000001">
    <property type="entry name" value="ATP synthase subunit alpha"/>
    <property type="match status" value="1"/>
</dbReference>
<dbReference type="FunFam" id="2.40.30.20:FF:000001">
    <property type="entry name" value="ATP synthase subunit alpha"/>
    <property type="match status" value="1"/>
</dbReference>
<dbReference type="FunFam" id="3.40.50.300:FF:002432">
    <property type="entry name" value="ATP synthase subunit alpha, mitochondrial"/>
    <property type="match status" value="1"/>
</dbReference>
<dbReference type="Gene3D" id="2.40.30.20">
    <property type="match status" value="1"/>
</dbReference>
<dbReference type="Gene3D" id="1.20.150.20">
    <property type="entry name" value="ATP synthase alpha/beta chain, C-terminal domain"/>
    <property type="match status" value="1"/>
</dbReference>
<dbReference type="Gene3D" id="3.40.50.300">
    <property type="entry name" value="P-loop containing nucleotide triphosphate hydrolases"/>
    <property type="match status" value="1"/>
</dbReference>
<dbReference type="HAMAP" id="MF_01346">
    <property type="entry name" value="ATP_synth_alpha_bact"/>
    <property type="match status" value="1"/>
</dbReference>
<dbReference type="InterPro" id="IPR023366">
    <property type="entry name" value="ATP_synth_asu-like_sf"/>
</dbReference>
<dbReference type="InterPro" id="IPR000793">
    <property type="entry name" value="ATP_synth_asu_C"/>
</dbReference>
<dbReference type="InterPro" id="IPR038376">
    <property type="entry name" value="ATP_synth_asu_C_sf"/>
</dbReference>
<dbReference type="InterPro" id="IPR033732">
    <property type="entry name" value="ATP_synth_F1_a_nt-bd_dom"/>
</dbReference>
<dbReference type="InterPro" id="IPR005294">
    <property type="entry name" value="ATP_synth_F1_asu"/>
</dbReference>
<dbReference type="InterPro" id="IPR020003">
    <property type="entry name" value="ATPase_a/bsu_AS"/>
</dbReference>
<dbReference type="InterPro" id="IPR004100">
    <property type="entry name" value="ATPase_F1/V1/A1_a/bsu_N"/>
</dbReference>
<dbReference type="InterPro" id="IPR036121">
    <property type="entry name" value="ATPase_F1/V1/A1_a/bsu_N_sf"/>
</dbReference>
<dbReference type="InterPro" id="IPR000194">
    <property type="entry name" value="ATPase_F1/V1/A1_a/bsu_nucl-bd"/>
</dbReference>
<dbReference type="InterPro" id="IPR027417">
    <property type="entry name" value="P-loop_NTPase"/>
</dbReference>
<dbReference type="NCBIfam" id="TIGR00962">
    <property type="entry name" value="atpA"/>
    <property type="match status" value="1"/>
</dbReference>
<dbReference type="NCBIfam" id="NF009884">
    <property type="entry name" value="PRK13343.1"/>
    <property type="match status" value="1"/>
</dbReference>
<dbReference type="PANTHER" id="PTHR48082">
    <property type="entry name" value="ATP SYNTHASE SUBUNIT ALPHA, MITOCHONDRIAL"/>
    <property type="match status" value="1"/>
</dbReference>
<dbReference type="PANTHER" id="PTHR48082:SF2">
    <property type="entry name" value="ATP SYNTHASE SUBUNIT ALPHA, MITOCHONDRIAL"/>
    <property type="match status" value="1"/>
</dbReference>
<dbReference type="Pfam" id="PF00006">
    <property type="entry name" value="ATP-synt_ab"/>
    <property type="match status" value="1"/>
</dbReference>
<dbReference type="Pfam" id="PF00306">
    <property type="entry name" value="ATP-synt_ab_C"/>
    <property type="match status" value="1"/>
</dbReference>
<dbReference type="Pfam" id="PF02874">
    <property type="entry name" value="ATP-synt_ab_N"/>
    <property type="match status" value="1"/>
</dbReference>
<dbReference type="PIRSF" id="PIRSF039088">
    <property type="entry name" value="F_ATPase_subunit_alpha"/>
    <property type="match status" value="1"/>
</dbReference>
<dbReference type="SUPFAM" id="SSF47917">
    <property type="entry name" value="C-terminal domain of alpha and beta subunits of F1 ATP synthase"/>
    <property type="match status" value="1"/>
</dbReference>
<dbReference type="SUPFAM" id="SSF50615">
    <property type="entry name" value="N-terminal domain of alpha and beta subunits of F1 ATP synthase"/>
    <property type="match status" value="1"/>
</dbReference>
<dbReference type="SUPFAM" id="SSF52540">
    <property type="entry name" value="P-loop containing nucleoside triphosphate hydrolases"/>
    <property type="match status" value="1"/>
</dbReference>
<dbReference type="PROSITE" id="PS00152">
    <property type="entry name" value="ATPASE_ALPHA_BETA"/>
    <property type="match status" value="1"/>
</dbReference>
<protein>
    <recommendedName>
        <fullName evidence="1">ATP synthase subunit alpha</fullName>
        <ecNumber evidence="1">7.1.2.2</ecNumber>
    </recommendedName>
    <alternativeName>
        <fullName evidence="1">ATP synthase F1 sector subunit alpha</fullName>
    </alternativeName>
    <alternativeName>
        <fullName evidence="1">F-ATPase subunit alpha</fullName>
    </alternativeName>
</protein>
<proteinExistence type="inferred from homology"/>